<dbReference type="EC" id="1.1.1.261" evidence="1"/>
<dbReference type="EMBL" id="AE010299">
    <property type="protein sequence ID" value="AAM07041.1"/>
    <property type="molecule type" value="Genomic_DNA"/>
</dbReference>
<dbReference type="RefSeq" id="WP_011023593.1">
    <property type="nucleotide sequence ID" value="NC_003552.1"/>
</dbReference>
<dbReference type="SMR" id="Q8TJU1"/>
<dbReference type="FunCoup" id="Q8TJU1">
    <property type="interactions" value="12"/>
</dbReference>
<dbReference type="STRING" id="188937.MA_3686"/>
<dbReference type="EnsemblBacteria" id="AAM07041">
    <property type="protein sequence ID" value="AAM07041"/>
    <property type="gene ID" value="MA_3686"/>
</dbReference>
<dbReference type="GeneID" id="1475579"/>
<dbReference type="KEGG" id="mac:MA_3686"/>
<dbReference type="HOGENOM" id="CLU_038362_0_0_2"/>
<dbReference type="InParanoid" id="Q8TJU1"/>
<dbReference type="OrthoDB" id="8656at2157"/>
<dbReference type="PhylomeDB" id="Q8TJU1"/>
<dbReference type="UniPathway" id="UPA00940"/>
<dbReference type="Proteomes" id="UP000002487">
    <property type="component" value="Chromosome"/>
</dbReference>
<dbReference type="GO" id="GO:0005737">
    <property type="term" value="C:cytoplasm"/>
    <property type="evidence" value="ECO:0007669"/>
    <property type="project" value="UniProtKB-SubCell"/>
</dbReference>
<dbReference type="GO" id="GO:0106357">
    <property type="term" value="F:glycerol-1-phosphate dehydrogenase (NAD+) activity"/>
    <property type="evidence" value="ECO:0007669"/>
    <property type="project" value="RHEA"/>
</dbReference>
<dbReference type="GO" id="GO:0106358">
    <property type="term" value="F:glycerol-1-phosphate dehydrogenase (NADP+) activity"/>
    <property type="evidence" value="ECO:0007669"/>
    <property type="project" value="RHEA"/>
</dbReference>
<dbReference type="GO" id="GO:0046872">
    <property type="term" value="F:metal ion binding"/>
    <property type="evidence" value="ECO:0007669"/>
    <property type="project" value="UniProtKB-KW"/>
</dbReference>
<dbReference type="GO" id="GO:0006650">
    <property type="term" value="P:glycerophospholipid metabolic process"/>
    <property type="evidence" value="ECO:0007669"/>
    <property type="project" value="UniProtKB-UniRule"/>
</dbReference>
<dbReference type="GO" id="GO:0008654">
    <property type="term" value="P:phospholipid biosynthetic process"/>
    <property type="evidence" value="ECO:0007669"/>
    <property type="project" value="UniProtKB-KW"/>
</dbReference>
<dbReference type="CDD" id="cd08173">
    <property type="entry name" value="Gro1PDH"/>
    <property type="match status" value="1"/>
</dbReference>
<dbReference type="Gene3D" id="3.40.50.1970">
    <property type="match status" value="1"/>
</dbReference>
<dbReference type="Gene3D" id="1.20.1090.10">
    <property type="entry name" value="Dehydroquinate synthase-like - alpha domain"/>
    <property type="match status" value="1"/>
</dbReference>
<dbReference type="HAMAP" id="MF_00497_A">
    <property type="entry name" value="G1P_dehydrogenase_A"/>
    <property type="match status" value="1"/>
</dbReference>
<dbReference type="InterPro" id="IPR023002">
    <property type="entry name" value="G1P_dehydrogenase_arc"/>
</dbReference>
<dbReference type="InterPro" id="IPR032837">
    <property type="entry name" value="G1PDH"/>
</dbReference>
<dbReference type="InterPro" id="IPR016205">
    <property type="entry name" value="Glycerol_DH"/>
</dbReference>
<dbReference type="NCBIfam" id="NF002022">
    <property type="entry name" value="PRK00843.1"/>
    <property type="match status" value="1"/>
</dbReference>
<dbReference type="PANTHER" id="PTHR43616">
    <property type="entry name" value="GLYCEROL DEHYDROGENASE"/>
    <property type="match status" value="1"/>
</dbReference>
<dbReference type="PANTHER" id="PTHR43616:SF5">
    <property type="entry name" value="GLYCEROL DEHYDROGENASE 1"/>
    <property type="match status" value="1"/>
</dbReference>
<dbReference type="Pfam" id="PF13685">
    <property type="entry name" value="Fe-ADH_2"/>
    <property type="match status" value="1"/>
</dbReference>
<dbReference type="PIRSF" id="PIRSF000112">
    <property type="entry name" value="Glycerol_dehydrogenase"/>
    <property type="match status" value="1"/>
</dbReference>
<dbReference type="SUPFAM" id="SSF56796">
    <property type="entry name" value="Dehydroquinate synthase-like"/>
    <property type="match status" value="1"/>
</dbReference>
<protein>
    <recommendedName>
        <fullName evidence="1">Glycerol-1-phosphate dehydrogenase [NAD(P)+]</fullName>
        <shortName evidence="1">G1P dehydrogenase</shortName>
        <shortName evidence="1">G1PDH</shortName>
        <ecNumber evidence="1">1.1.1.261</ecNumber>
    </recommendedName>
    <alternativeName>
        <fullName evidence="1">Enantiomeric glycerophosphate synthase</fullName>
    </alternativeName>
    <alternativeName>
        <fullName evidence="1">sn-glycerol-1-phosphate dehydrogenase</fullName>
    </alternativeName>
</protein>
<feature type="chain" id="PRO_0000157341" description="Glycerol-1-phosphate dehydrogenase [NAD(P)+]">
    <location>
        <begin position="1"/>
        <end position="356"/>
    </location>
</feature>
<feature type="binding site" evidence="1">
    <location>
        <begin position="103"/>
        <end position="107"/>
    </location>
    <ligand>
        <name>NAD(+)</name>
        <dbReference type="ChEBI" id="CHEBI:57540"/>
    </ligand>
</feature>
<feature type="binding site" evidence="1">
    <location>
        <begin position="125"/>
        <end position="128"/>
    </location>
    <ligand>
        <name>NAD(+)</name>
        <dbReference type="ChEBI" id="CHEBI:57540"/>
    </ligand>
</feature>
<feature type="binding site" evidence="1">
    <location>
        <position position="130"/>
    </location>
    <ligand>
        <name>substrate</name>
    </ligand>
</feature>
<feature type="binding site" evidence="1">
    <location>
        <position position="134"/>
    </location>
    <ligand>
        <name>NAD(+)</name>
        <dbReference type="ChEBI" id="CHEBI:57540"/>
    </ligand>
</feature>
<feature type="binding site" evidence="1">
    <location>
        <position position="177"/>
    </location>
    <ligand>
        <name>substrate</name>
    </ligand>
</feature>
<feature type="binding site" evidence="1">
    <location>
        <position position="177"/>
    </location>
    <ligand>
        <name>Zn(2+)</name>
        <dbReference type="ChEBI" id="CHEBI:29105"/>
        <note>catalytic</note>
    </ligand>
</feature>
<feature type="binding site" evidence="1">
    <location>
        <position position="257"/>
    </location>
    <ligand>
        <name>Zn(2+)</name>
        <dbReference type="ChEBI" id="CHEBI:29105"/>
        <note>catalytic</note>
    </ligand>
</feature>
<feature type="binding site" evidence="1">
    <location>
        <position position="261"/>
    </location>
    <ligand>
        <name>substrate</name>
    </ligand>
</feature>
<feature type="binding site" evidence="1">
    <location>
        <position position="273"/>
    </location>
    <ligand>
        <name>Zn(2+)</name>
        <dbReference type="ChEBI" id="CHEBI:29105"/>
        <note>catalytic</note>
    </ligand>
</feature>
<accession>Q8TJU1</accession>
<proteinExistence type="inferred from homology"/>
<evidence type="ECO:0000255" key="1">
    <source>
        <dbReference type="HAMAP-Rule" id="MF_00497"/>
    </source>
</evidence>
<sequence length="356" mass="38029">MKLTINKNSAKWMQLPRDVLVGHGVLEEIGDVCRDLKLKGNALIVTGNTTRDVAGKRVSTLLENAGSSTEMVLTCRATMEEVDKIMQKASETGATFLLGIGSGRSIDLAKLASTRLEIPFISVPTAASHDGIASSRASIIDNGKNASVQAQAPIAVVADTEIISAAPFRFLVAGCGDIISNYTAVLDWELASRLRNEYFGEYAAALSRMAARVVIENADSIKPEHETSARLVVKALVSNGVAMSIAGSSRPASGSEHMFSHALDRIAPKPALHGEQCGVGTIMMMYLHGGNWQEIRDALKKIGAPTNAEELGIEDRYIVEALLHAHSIRPDRYTILGNGLTPSAAEKVARITKVIS</sequence>
<name>G1PDH_METAC</name>
<keyword id="KW-0963">Cytoplasm</keyword>
<keyword id="KW-0444">Lipid biosynthesis</keyword>
<keyword id="KW-0443">Lipid metabolism</keyword>
<keyword id="KW-0479">Metal-binding</keyword>
<keyword id="KW-0520">NAD</keyword>
<keyword id="KW-0521">NADP</keyword>
<keyword id="KW-0560">Oxidoreductase</keyword>
<keyword id="KW-0594">Phospholipid biosynthesis</keyword>
<keyword id="KW-1208">Phospholipid metabolism</keyword>
<keyword id="KW-1185">Reference proteome</keyword>
<keyword id="KW-0862">Zinc</keyword>
<reference key="1">
    <citation type="journal article" date="2002" name="Genome Res.">
        <title>The genome of Methanosarcina acetivorans reveals extensive metabolic and physiological diversity.</title>
        <authorList>
            <person name="Galagan J.E."/>
            <person name="Nusbaum C."/>
            <person name="Roy A."/>
            <person name="Endrizzi M.G."/>
            <person name="Macdonald P."/>
            <person name="FitzHugh W."/>
            <person name="Calvo S."/>
            <person name="Engels R."/>
            <person name="Smirnov S."/>
            <person name="Atnoor D."/>
            <person name="Brown A."/>
            <person name="Allen N."/>
            <person name="Naylor J."/>
            <person name="Stange-Thomann N."/>
            <person name="DeArellano K."/>
            <person name="Johnson R."/>
            <person name="Linton L."/>
            <person name="McEwan P."/>
            <person name="McKernan K."/>
            <person name="Talamas J."/>
            <person name="Tirrell A."/>
            <person name="Ye W."/>
            <person name="Zimmer A."/>
            <person name="Barber R.D."/>
            <person name="Cann I."/>
            <person name="Graham D.E."/>
            <person name="Grahame D.A."/>
            <person name="Guss A.M."/>
            <person name="Hedderich R."/>
            <person name="Ingram-Smith C."/>
            <person name="Kuettner H.C."/>
            <person name="Krzycki J.A."/>
            <person name="Leigh J.A."/>
            <person name="Li W."/>
            <person name="Liu J."/>
            <person name="Mukhopadhyay B."/>
            <person name="Reeve J.N."/>
            <person name="Smith K."/>
            <person name="Springer T.A."/>
            <person name="Umayam L.A."/>
            <person name="White O."/>
            <person name="White R.H."/>
            <person name="de Macario E.C."/>
            <person name="Ferry J.G."/>
            <person name="Jarrell K.F."/>
            <person name="Jing H."/>
            <person name="Macario A.J.L."/>
            <person name="Paulsen I.T."/>
            <person name="Pritchett M."/>
            <person name="Sowers K.R."/>
            <person name="Swanson R.V."/>
            <person name="Zinder S.H."/>
            <person name="Lander E."/>
            <person name="Metcalf W.W."/>
            <person name="Birren B."/>
        </authorList>
    </citation>
    <scope>NUCLEOTIDE SEQUENCE [LARGE SCALE GENOMIC DNA]</scope>
    <source>
        <strain>ATCC 35395 / DSM 2834 / JCM 12185 / C2A</strain>
    </source>
</reference>
<organism>
    <name type="scientific">Methanosarcina acetivorans (strain ATCC 35395 / DSM 2834 / JCM 12185 / C2A)</name>
    <dbReference type="NCBI Taxonomy" id="188937"/>
    <lineage>
        <taxon>Archaea</taxon>
        <taxon>Methanobacteriati</taxon>
        <taxon>Methanobacteriota</taxon>
        <taxon>Stenosarchaea group</taxon>
        <taxon>Methanomicrobia</taxon>
        <taxon>Methanosarcinales</taxon>
        <taxon>Methanosarcinaceae</taxon>
        <taxon>Methanosarcina</taxon>
    </lineage>
</organism>
<gene>
    <name evidence="1" type="primary">egsA</name>
    <name type="synonym">gldA</name>
    <name type="ordered locus">MA_3686</name>
</gene>
<comment type="function">
    <text evidence="1">Catalyzes the NAD(P)H-dependent reduction of dihydroxyacetonephosphate (DHAP or glycerone phosphate) to glycerol 1-phosphate (G1P). The G1P thus generated is used as the glycerophosphate backbone of phospholipids in the cellular membranes of Archaea.</text>
</comment>
<comment type="catalytic activity">
    <reaction evidence="1">
        <text>sn-glycerol 1-phosphate + NAD(+) = dihydroxyacetone phosphate + NADH + H(+)</text>
        <dbReference type="Rhea" id="RHEA:21412"/>
        <dbReference type="ChEBI" id="CHEBI:15378"/>
        <dbReference type="ChEBI" id="CHEBI:57540"/>
        <dbReference type="ChEBI" id="CHEBI:57642"/>
        <dbReference type="ChEBI" id="CHEBI:57685"/>
        <dbReference type="ChEBI" id="CHEBI:57945"/>
        <dbReference type="EC" id="1.1.1.261"/>
    </reaction>
</comment>
<comment type="catalytic activity">
    <reaction evidence="1">
        <text>sn-glycerol 1-phosphate + NADP(+) = dihydroxyacetone phosphate + NADPH + H(+)</text>
        <dbReference type="Rhea" id="RHEA:21416"/>
        <dbReference type="ChEBI" id="CHEBI:15378"/>
        <dbReference type="ChEBI" id="CHEBI:57642"/>
        <dbReference type="ChEBI" id="CHEBI:57685"/>
        <dbReference type="ChEBI" id="CHEBI:57783"/>
        <dbReference type="ChEBI" id="CHEBI:58349"/>
        <dbReference type="EC" id="1.1.1.261"/>
    </reaction>
</comment>
<comment type="cofactor">
    <cofactor evidence="1">
        <name>Zn(2+)</name>
        <dbReference type="ChEBI" id="CHEBI:29105"/>
    </cofactor>
    <text evidence="1">Binds 1 zinc ion per subunit.</text>
</comment>
<comment type="pathway">
    <text evidence="1">Membrane lipid metabolism; glycerophospholipid metabolism.</text>
</comment>
<comment type="subcellular location">
    <subcellularLocation>
        <location evidence="1">Cytoplasm</location>
    </subcellularLocation>
</comment>
<comment type="similarity">
    <text evidence="1">Belongs to the glycerol-1-phosphate dehydrogenase family.</text>
</comment>